<proteinExistence type="inferred from homology"/>
<evidence type="ECO:0000255" key="1">
    <source>
        <dbReference type="HAMAP-Rule" id="MF_00366"/>
    </source>
</evidence>
<sequence>MARVTVEDCLDKVETRFDLVVLASMRANKILKNGYSESMENEKKEKATVVALREIAESEITPEQILRNEIEG</sequence>
<dbReference type="EC" id="2.7.7.6" evidence="1"/>
<dbReference type="EMBL" id="CP000803">
    <property type="protein sequence ID" value="ABU62092.1"/>
    <property type="molecule type" value="Genomic_DNA"/>
</dbReference>
<dbReference type="RefSeq" id="WP_003019409.1">
    <property type="nucleotide sequence ID" value="NC_009749.1"/>
</dbReference>
<dbReference type="SMR" id="A7NDN9"/>
<dbReference type="KEGG" id="fta:FTA_1617"/>
<dbReference type="HOGENOM" id="CLU_125406_5_1_6"/>
<dbReference type="GO" id="GO:0000428">
    <property type="term" value="C:DNA-directed RNA polymerase complex"/>
    <property type="evidence" value="ECO:0007669"/>
    <property type="project" value="UniProtKB-KW"/>
</dbReference>
<dbReference type="GO" id="GO:0003677">
    <property type="term" value="F:DNA binding"/>
    <property type="evidence" value="ECO:0007669"/>
    <property type="project" value="UniProtKB-UniRule"/>
</dbReference>
<dbReference type="GO" id="GO:0003899">
    <property type="term" value="F:DNA-directed RNA polymerase activity"/>
    <property type="evidence" value="ECO:0007669"/>
    <property type="project" value="UniProtKB-UniRule"/>
</dbReference>
<dbReference type="GO" id="GO:0006351">
    <property type="term" value="P:DNA-templated transcription"/>
    <property type="evidence" value="ECO:0007669"/>
    <property type="project" value="UniProtKB-UniRule"/>
</dbReference>
<dbReference type="Gene3D" id="3.90.940.10">
    <property type="match status" value="1"/>
</dbReference>
<dbReference type="HAMAP" id="MF_00366">
    <property type="entry name" value="RNApol_bact_RpoZ"/>
    <property type="match status" value="1"/>
</dbReference>
<dbReference type="InterPro" id="IPR003716">
    <property type="entry name" value="DNA-dir_RNA_pol_omega"/>
</dbReference>
<dbReference type="InterPro" id="IPR006110">
    <property type="entry name" value="Pol_omega/Rpo6/RPB6"/>
</dbReference>
<dbReference type="InterPro" id="IPR036161">
    <property type="entry name" value="RPB6/omega-like_sf"/>
</dbReference>
<dbReference type="NCBIfam" id="TIGR00690">
    <property type="entry name" value="rpoZ"/>
    <property type="match status" value="1"/>
</dbReference>
<dbReference type="PANTHER" id="PTHR34476">
    <property type="entry name" value="DNA-DIRECTED RNA POLYMERASE SUBUNIT OMEGA"/>
    <property type="match status" value="1"/>
</dbReference>
<dbReference type="PANTHER" id="PTHR34476:SF1">
    <property type="entry name" value="DNA-DIRECTED RNA POLYMERASE SUBUNIT OMEGA"/>
    <property type="match status" value="1"/>
</dbReference>
<dbReference type="Pfam" id="PF01192">
    <property type="entry name" value="RNA_pol_Rpb6"/>
    <property type="match status" value="1"/>
</dbReference>
<dbReference type="SMART" id="SM01409">
    <property type="entry name" value="RNA_pol_Rpb6"/>
    <property type="match status" value="1"/>
</dbReference>
<dbReference type="SUPFAM" id="SSF63562">
    <property type="entry name" value="RPB6/omega subunit-like"/>
    <property type="match status" value="1"/>
</dbReference>
<comment type="function">
    <text evidence="1">Promotes RNA polymerase assembly. Latches the N- and C-terminal regions of the beta' subunit thereby facilitating its interaction with the beta and alpha subunits.</text>
</comment>
<comment type="catalytic activity">
    <reaction evidence="1">
        <text>RNA(n) + a ribonucleoside 5'-triphosphate = RNA(n+1) + diphosphate</text>
        <dbReference type="Rhea" id="RHEA:21248"/>
        <dbReference type="Rhea" id="RHEA-COMP:14527"/>
        <dbReference type="Rhea" id="RHEA-COMP:17342"/>
        <dbReference type="ChEBI" id="CHEBI:33019"/>
        <dbReference type="ChEBI" id="CHEBI:61557"/>
        <dbReference type="ChEBI" id="CHEBI:140395"/>
        <dbReference type="EC" id="2.7.7.6"/>
    </reaction>
</comment>
<comment type="subunit">
    <text evidence="1">The RNAP catalytic core consists of 2 alpha, 1 beta, 1 beta' and 1 omega subunit. When a sigma factor is associated with the core the holoenzyme is formed, which can initiate transcription.</text>
</comment>
<comment type="similarity">
    <text evidence="1">Belongs to the RNA polymerase subunit omega family.</text>
</comment>
<gene>
    <name evidence="1" type="primary">rpoZ</name>
    <name type="ordered locus">FTA_1617</name>
</gene>
<organism>
    <name type="scientific">Francisella tularensis subsp. holarctica (strain FTNF002-00 / FTA)</name>
    <dbReference type="NCBI Taxonomy" id="458234"/>
    <lineage>
        <taxon>Bacteria</taxon>
        <taxon>Pseudomonadati</taxon>
        <taxon>Pseudomonadota</taxon>
        <taxon>Gammaproteobacteria</taxon>
        <taxon>Thiotrichales</taxon>
        <taxon>Francisellaceae</taxon>
        <taxon>Francisella</taxon>
    </lineage>
</organism>
<keyword id="KW-0240">DNA-directed RNA polymerase</keyword>
<keyword id="KW-0548">Nucleotidyltransferase</keyword>
<keyword id="KW-0804">Transcription</keyword>
<keyword id="KW-0808">Transferase</keyword>
<protein>
    <recommendedName>
        <fullName evidence="1">DNA-directed RNA polymerase subunit omega</fullName>
        <shortName evidence="1">RNAP omega subunit</shortName>
        <ecNumber evidence="1">2.7.7.6</ecNumber>
    </recommendedName>
    <alternativeName>
        <fullName evidence="1">RNA polymerase omega subunit</fullName>
    </alternativeName>
    <alternativeName>
        <fullName evidence="1">Transcriptase subunit omega</fullName>
    </alternativeName>
</protein>
<reference key="1">
    <citation type="journal article" date="2009" name="PLoS ONE">
        <title>Complete genome sequence of Francisella tularensis subspecies holarctica FTNF002-00.</title>
        <authorList>
            <person name="Barabote R.D."/>
            <person name="Xie G."/>
            <person name="Brettin T.S."/>
            <person name="Hinrichs S.H."/>
            <person name="Fey P.D."/>
            <person name="Jay J.J."/>
            <person name="Engle J.L."/>
            <person name="Godbole S.D."/>
            <person name="Noronha J.M."/>
            <person name="Scheuermann R.H."/>
            <person name="Zhou L.W."/>
            <person name="Lion C."/>
            <person name="Dempsey M.P."/>
        </authorList>
    </citation>
    <scope>NUCLEOTIDE SEQUENCE [LARGE SCALE GENOMIC DNA]</scope>
    <source>
        <strain>FTNF002-00 / FTA</strain>
    </source>
</reference>
<name>RPOZ_FRATF</name>
<feature type="chain" id="PRO_1000005929" description="DNA-directed RNA polymerase subunit omega">
    <location>
        <begin position="1"/>
        <end position="72"/>
    </location>
</feature>
<accession>A7NDN9</accession>